<evidence type="ECO:0000250" key="1"/>
<evidence type="ECO:0000255" key="2"/>
<evidence type="ECO:0000269" key="3">
    <source>
    </source>
</evidence>
<evidence type="ECO:0000305" key="4"/>
<sequence>MSNWYSKTKDQTLIDLETNEQHGLTEEIASERLKQYGSNELATKQKRTLWQRIFAQINDVLVYVLIIAALISAFVGEWADASIIALVVVLNAVIGVVQESKAEQALEALKKMATPKAIVKRDGELKEIPSEHVVPGDIVMLDAGRYIPCDLRLIETANLKVEESALTGESVPVDKDAIYHPSMQSDEQVPLGDQKNMAFMSTLVTYGRGVGVAVETGMNSQIGKIATLLHEADDDMTPLQKSLAQVGKYLGFVAVAICIVMFLIGFLQRRDTLEMFMTAISLAVAAIPEGLPAIVSIVLAIGVQRMIKQNVIIRKLPAVEALGSVTIICSDKTGTLTQNKMTVTHFYSDNTYDQLENLNVNNDVQRLLLENMVLCNDASYNNESQTGDPTEIALLVAGSTFNMQKDYLEKIHERINELPFDSDRKMMSTVHTYDESYYSMTKGAIDKLLPRCTHILKNGKIEVLTEADKNQILEAARAMSREALRVLSFAFKQYNSSNVDIDHLEENLIFIGLVGMIDPPRTEVKDSITECKKAGIRTVMITGDHKDTAFAIAKELGIAEDICEIMIGTELDNISDTELASKIDHLHVFARVSPEHKVKIVKALRAKGNIVSMTGDGVNDAPSLKQADVGVAMGITGTDVAKGAADVVLTDDNFSSIVKAVEEGRNIYRNIKKSILFLLSCNFGEIITLFLAILLGWATPLRPIHILWVNLITDTLPALSLGVDPEDPDVMKEKPRHAKESLFSGSVPFLIFNGVVIGLLTLIAFIAGAKFYTGDTNLFPLFPERIDEDALLHAQTMAFVVLSFSQLVHSFNLRSRTKSIFSIGIFTNKYLVFSLLIGVLMQVCIISIPPLANIFGVHALTLRDWGFVLLLSIIPLVVNEIIKLAKKN</sequence>
<protein>
    <recommendedName>
        <fullName>Calcium-transporting ATPase 1</fullName>
        <ecNumber>7.2.2.10</ecNumber>
    </recommendedName>
    <alternativeName>
        <fullName>BACCA1</fullName>
    </alternativeName>
</protein>
<reference key="1">
    <citation type="journal article" date="2004" name="Nucleic Acids Res.">
        <title>The genome sequence of Bacillus cereus ATCC 10987 reveals metabolic adaptations and a large plasmid related to Bacillus anthracis pXO1.</title>
        <authorList>
            <person name="Rasko D.A."/>
            <person name="Ravel J."/>
            <person name="Oekstad O.A."/>
            <person name="Helgason E."/>
            <person name="Cer R.Z."/>
            <person name="Jiang L."/>
            <person name="Shores K.A."/>
            <person name="Fouts D.E."/>
            <person name="Tourasse N.J."/>
            <person name="Angiuoli S.V."/>
            <person name="Kolonay J.F."/>
            <person name="Nelson W.C."/>
            <person name="Kolstoe A.-B."/>
            <person name="Fraser C.M."/>
            <person name="Read T.D."/>
        </authorList>
    </citation>
    <scope>NUCLEOTIDE SEQUENCE [LARGE SCALE GENOMIC DNA]</scope>
    <source>
        <strain>ATCC 10987 / NRS 248</strain>
    </source>
</reference>
<reference key="2">
    <citation type="journal article" date="2013" name="FEBS J.">
        <title>Probing determinants of cyclopiazonic acid sensitivity of bacterial Ca2+-ATPases.</title>
        <authorList>
            <person name="Kotsubei A."/>
            <person name="Gorgel M."/>
            <person name="Morth J.P."/>
            <person name="Nissen P."/>
            <person name="Andersen J.L."/>
        </authorList>
    </citation>
    <scope>FUNCTION</scope>
    <scope>CATALYTIC ACTIVITY</scope>
    <scope>ACTIVITY REGULATION</scope>
</reference>
<name>BACA1_BACC1</name>
<organism>
    <name type="scientific">Bacillus cereus (strain ATCC 10987 / NRS 248)</name>
    <dbReference type="NCBI Taxonomy" id="222523"/>
    <lineage>
        <taxon>Bacteria</taxon>
        <taxon>Bacillati</taxon>
        <taxon>Bacillota</taxon>
        <taxon>Bacilli</taxon>
        <taxon>Bacillales</taxon>
        <taxon>Bacillaceae</taxon>
        <taxon>Bacillus</taxon>
        <taxon>Bacillus cereus group</taxon>
    </lineage>
</organism>
<accession>Q73E41</accession>
<keyword id="KW-0067">ATP-binding</keyword>
<keyword id="KW-0106">Calcium</keyword>
<keyword id="KW-0109">Calcium transport</keyword>
<keyword id="KW-1003">Cell membrane</keyword>
<keyword id="KW-0406">Ion transport</keyword>
<keyword id="KW-0472">Membrane</keyword>
<keyword id="KW-0479">Metal-binding</keyword>
<keyword id="KW-0547">Nucleotide-binding</keyword>
<keyword id="KW-0597">Phosphoprotein</keyword>
<keyword id="KW-1278">Translocase</keyword>
<keyword id="KW-0812">Transmembrane</keyword>
<keyword id="KW-1133">Transmembrane helix</keyword>
<keyword id="KW-0813">Transport</keyword>
<proteinExistence type="evidence at protein level"/>
<feature type="chain" id="PRO_0000424525" description="Calcium-transporting ATPase 1">
    <location>
        <begin position="1"/>
        <end position="888"/>
    </location>
</feature>
<feature type="transmembrane region" description="Helical" evidence="2">
    <location>
        <begin position="53"/>
        <end position="75"/>
    </location>
</feature>
<feature type="transmembrane region" description="Helical" evidence="2">
    <location>
        <begin position="79"/>
        <end position="97"/>
    </location>
</feature>
<feature type="transmembrane region" description="Helical" evidence="2">
    <location>
        <begin position="246"/>
        <end position="266"/>
    </location>
</feature>
<feature type="transmembrane region" description="Helical" evidence="2">
    <location>
        <begin position="283"/>
        <end position="303"/>
    </location>
</feature>
<feature type="transmembrane region" description="Helical" evidence="2">
    <location>
        <begin position="675"/>
        <end position="695"/>
    </location>
</feature>
<feature type="transmembrane region" description="Helical" evidence="2">
    <location>
        <begin position="703"/>
        <end position="723"/>
    </location>
</feature>
<feature type="transmembrane region" description="Helical" evidence="2">
    <location>
        <begin position="747"/>
        <end position="767"/>
    </location>
</feature>
<feature type="transmembrane region" description="Helical" evidence="2">
    <location>
        <begin position="791"/>
        <end position="811"/>
    </location>
</feature>
<feature type="transmembrane region" description="Helical" evidence="2">
    <location>
        <begin position="831"/>
        <end position="851"/>
    </location>
</feature>
<feature type="transmembrane region" description="Helical" evidence="2">
    <location>
        <begin position="865"/>
        <end position="885"/>
    </location>
</feature>
<feature type="active site" description="4-aspartylphosphate intermediate" evidence="1">
    <location>
        <position position="331"/>
    </location>
</feature>
<feature type="binding site" evidence="1">
    <location>
        <position position="284"/>
    </location>
    <ligand>
        <name>Ca(2+)</name>
        <dbReference type="ChEBI" id="CHEBI:29108"/>
    </ligand>
</feature>
<feature type="binding site" evidence="1">
    <location>
        <position position="285"/>
    </location>
    <ligand>
        <name>Ca(2+)</name>
        <dbReference type="ChEBI" id="CHEBI:29108"/>
    </ligand>
</feature>
<feature type="binding site" evidence="1">
    <location>
        <position position="287"/>
    </location>
    <ligand>
        <name>Ca(2+)</name>
        <dbReference type="ChEBI" id="CHEBI:29108"/>
    </ligand>
</feature>
<feature type="binding site" evidence="1">
    <location>
        <position position="289"/>
    </location>
    <ligand>
        <name>Ca(2+)</name>
        <dbReference type="ChEBI" id="CHEBI:29108"/>
    </ligand>
</feature>
<feature type="binding site" evidence="1">
    <location>
        <position position="710"/>
    </location>
    <ligand>
        <name>Ca(2+)</name>
        <dbReference type="ChEBI" id="CHEBI:29108"/>
    </ligand>
</feature>
<feature type="binding site" evidence="1">
    <location>
        <position position="714"/>
    </location>
    <ligand>
        <name>Ca(2+)</name>
        <dbReference type="ChEBI" id="CHEBI:29108"/>
    </ligand>
</feature>
<comment type="function">
    <text evidence="3">Catalyzes the hydrolysis of ATP coupled with the transport of calcium.</text>
</comment>
<comment type="catalytic activity">
    <reaction evidence="3">
        <text>Ca(2+)(in) + ATP + H2O = Ca(2+)(out) + ADP + phosphate + H(+)</text>
        <dbReference type="Rhea" id="RHEA:18105"/>
        <dbReference type="ChEBI" id="CHEBI:15377"/>
        <dbReference type="ChEBI" id="CHEBI:15378"/>
        <dbReference type="ChEBI" id="CHEBI:29108"/>
        <dbReference type="ChEBI" id="CHEBI:30616"/>
        <dbReference type="ChEBI" id="CHEBI:43474"/>
        <dbReference type="ChEBI" id="CHEBI:456216"/>
        <dbReference type="EC" id="7.2.2.10"/>
    </reaction>
</comment>
<comment type="activity regulation">
    <text evidence="3">Inhibited by cyclopiazonic acid (CPA).</text>
</comment>
<comment type="subcellular location">
    <subcellularLocation>
        <location evidence="1">Cell membrane</location>
        <topology evidence="1">Multi-pass membrane protein</topology>
    </subcellularLocation>
</comment>
<comment type="similarity">
    <text evidence="4">Belongs to the cation transport ATPase (P-type) (TC 3.A.3) family. Type IIA subfamily.</text>
</comment>
<gene>
    <name type="ordered locus">BCE_0519</name>
</gene>
<dbReference type="EC" id="7.2.2.10"/>
<dbReference type="EMBL" id="AE017194">
    <property type="protein sequence ID" value="AAS39454.1"/>
    <property type="molecule type" value="Genomic_DNA"/>
</dbReference>
<dbReference type="SMR" id="Q73E41"/>
<dbReference type="KEGG" id="bca:BCE_0519"/>
<dbReference type="HOGENOM" id="CLU_002360_2_1_9"/>
<dbReference type="Proteomes" id="UP000002527">
    <property type="component" value="Chromosome"/>
</dbReference>
<dbReference type="GO" id="GO:0005886">
    <property type="term" value="C:plasma membrane"/>
    <property type="evidence" value="ECO:0007669"/>
    <property type="project" value="UniProtKB-SubCell"/>
</dbReference>
<dbReference type="GO" id="GO:0005524">
    <property type="term" value="F:ATP binding"/>
    <property type="evidence" value="ECO:0007669"/>
    <property type="project" value="UniProtKB-KW"/>
</dbReference>
<dbReference type="GO" id="GO:0016887">
    <property type="term" value="F:ATP hydrolysis activity"/>
    <property type="evidence" value="ECO:0007669"/>
    <property type="project" value="InterPro"/>
</dbReference>
<dbReference type="GO" id="GO:0046872">
    <property type="term" value="F:metal ion binding"/>
    <property type="evidence" value="ECO:0007669"/>
    <property type="project" value="UniProtKB-KW"/>
</dbReference>
<dbReference type="GO" id="GO:0005388">
    <property type="term" value="F:P-type calcium transporter activity"/>
    <property type="evidence" value="ECO:0007669"/>
    <property type="project" value="UniProtKB-EC"/>
</dbReference>
<dbReference type="CDD" id="cd02089">
    <property type="entry name" value="P-type_ATPase_Ca_prok"/>
    <property type="match status" value="1"/>
</dbReference>
<dbReference type="FunFam" id="2.70.150.10:FF:000016">
    <property type="entry name" value="Calcium-transporting P-type ATPase putative"/>
    <property type="match status" value="1"/>
</dbReference>
<dbReference type="FunFam" id="3.40.50.1000:FF:000028">
    <property type="entry name" value="Calcium-transporting P-type ATPase, putative"/>
    <property type="match status" value="1"/>
</dbReference>
<dbReference type="FunFam" id="3.40.1110.10:FF:000053">
    <property type="entry name" value="Cation-transporting ATPase, E1-E2 family"/>
    <property type="match status" value="1"/>
</dbReference>
<dbReference type="Gene3D" id="3.40.1110.10">
    <property type="entry name" value="Calcium-transporting ATPase, cytoplasmic domain N"/>
    <property type="match status" value="1"/>
</dbReference>
<dbReference type="Gene3D" id="2.70.150.10">
    <property type="entry name" value="Calcium-transporting ATPase, cytoplasmic transduction domain A"/>
    <property type="match status" value="1"/>
</dbReference>
<dbReference type="Gene3D" id="1.20.1110.10">
    <property type="entry name" value="Calcium-transporting ATPase, transmembrane domain"/>
    <property type="match status" value="1"/>
</dbReference>
<dbReference type="Gene3D" id="3.40.50.1000">
    <property type="entry name" value="HAD superfamily/HAD-like"/>
    <property type="match status" value="1"/>
</dbReference>
<dbReference type="InterPro" id="IPR006068">
    <property type="entry name" value="ATPase_P-typ_cation-transptr_C"/>
</dbReference>
<dbReference type="InterPro" id="IPR004014">
    <property type="entry name" value="ATPase_P-typ_cation-transptr_N"/>
</dbReference>
<dbReference type="InterPro" id="IPR023299">
    <property type="entry name" value="ATPase_P-typ_cyto_dom_N"/>
</dbReference>
<dbReference type="InterPro" id="IPR018303">
    <property type="entry name" value="ATPase_P-typ_P_site"/>
</dbReference>
<dbReference type="InterPro" id="IPR023298">
    <property type="entry name" value="ATPase_P-typ_TM_dom_sf"/>
</dbReference>
<dbReference type="InterPro" id="IPR008250">
    <property type="entry name" value="ATPase_P-typ_transduc_dom_A_sf"/>
</dbReference>
<dbReference type="InterPro" id="IPR036412">
    <property type="entry name" value="HAD-like_sf"/>
</dbReference>
<dbReference type="InterPro" id="IPR023214">
    <property type="entry name" value="HAD_sf"/>
</dbReference>
<dbReference type="InterPro" id="IPR001757">
    <property type="entry name" value="P_typ_ATPase"/>
</dbReference>
<dbReference type="InterPro" id="IPR044492">
    <property type="entry name" value="P_typ_ATPase_HD_dom"/>
</dbReference>
<dbReference type="NCBIfam" id="TIGR01494">
    <property type="entry name" value="ATPase_P-type"/>
    <property type="match status" value="4"/>
</dbReference>
<dbReference type="PANTHER" id="PTHR42861">
    <property type="entry name" value="CALCIUM-TRANSPORTING ATPASE"/>
    <property type="match status" value="1"/>
</dbReference>
<dbReference type="Pfam" id="PF13246">
    <property type="entry name" value="Cation_ATPase"/>
    <property type="match status" value="1"/>
</dbReference>
<dbReference type="Pfam" id="PF00689">
    <property type="entry name" value="Cation_ATPase_C"/>
    <property type="match status" value="1"/>
</dbReference>
<dbReference type="Pfam" id="PF00690">
    <property type="entry name" value="Cation_ATPase_N"/>
    <property type="match status" value="1"/>
</dbReference>
<dbReference type="Pfam" id="PF00122">
    <property type="entry name" value="E1-E2_ATPase"/>
    <property type="match status" value="1"/>
</dbReference>
<dbReference type="PRINTS" id="PR00119">
    <property type="entry name" value="CATATPASE"/>
</dbReference>
<dbReference type="SFLD" id="SFLDS00003">
    <property type="entry name" value="Haloacid_Dehalogenase"/>
    <property type="match status" value="1"/>
</dbReference>
<dbReference type="SFLD" id="SFLDF00027">
    <property type="entry name" value="p-type_atpase"/>
    <property type="match status" value="1"/>
</dbReference>
<dbReference type="SMART" id="SM00831">
    <property type="entry name" value="Cation_ATPase_N"/>
    <property type="match status" value="1"/>
</dbReference>
<dbReference type="SUPFAM" id="SSF81653">
    <property type="entry name" value="Calcium ATPase, transduction domain A"/>
    <property type="match status" value="1"/>
</dbReference>
<dbReference type="SUPFAM" id="SSF81665">
    <property type="entry name" value="Calcium ATPase, transmembrane domain M"/>
    <property type="match status" value="1"/>
</dbReference>
<dbReference type="SUPFAM" id="SSF56784">
    <property type="entry name" value="HAD-like"/>
    <property type="match status" value="1"/>
</dbReference>
<dbReference type="SUPFAM" id="SSF81660">
    <property type="entry name" value="Metal cation-transporting ATPase, ATP-binding domain N"/>
    <property type="match status" value="1"/>
</dbReference>
<dbReference type="PROSITE" id="PS00154">
    <property type="entry name" value="ATPASE_E1_E2"/>
    <property type="match status" value="1"/>
</dbReference>